<accession>Q7MN84</accession>
<gene>
    <name evidence="1" type="primary">dnaJ</name>
    <name type="ordered locus">VV0833</name>
</gene>
<organism>
    <name type="scientific">Vibrio vulnificus (strain YJ016)</name>
    <dbReference type="NCBI Taxonomy" id="196600"/>
    <lineage>
        <taxon>Bacteria</taxon>
        <taxon>Pseudomonadati</taxon>
        <taxon>Pseudomonadota</taxon>
        <taxon>Gammaproteobacteria</taxon>
        <taxon>Vibrionales</taxon>
        <taxon>Vibrionaceae</taxon>
        <taxon>Vibrio</taxon>
    </lineage>
</organism>
<protein>
    <recommendedName>
        <fullName evidence="1">Chaperone protein DnaJ</fullName>
    </recommendedName>
</protein>
<dbReference type="EMBL" id="BA000037">
    <property type="protein sequence ID" value="BAC93597.1"/>
    <property type="status" value="ALT_INIT"/>
    <property type="molecule type" value="Genomic_DNA"/>
</dbReference>
<dbReference type="RefSeq" id="WP_011078452.1">
    <property type="nucleotide sequence ID" value="NC_005139.1"/>
</dbReference>
<dbReference type="SMR" id="Q7MN84"/>
<dbReference type="STRING" id="672.VV93_v1c07740"/>
<dbReference type="KEGG" id="vvy:VV0833"/>
<dbReference type="PATRIC" id="fig|196600.6.peg.842"/>
<dbReference type="eggNOG" id="COG0484">
    <property type="taxonomic scope" value="Bacteria"/>
</dbReference>
<dbReference type="HOGENOM" id="CLU_017633_0_7_6"/>
<dbReference type="Proteomes" id="UP000002675">
    <property type="component" value="Chromosome I"/>
</dbReference>
<dbReference type="GO" id="GO:0005737">
    <property type="term" value="C:cytoplasm"/>
    <property type="evidence" value="ECO:0007669"/>
    <property type="project" value="UniProtKB-SubCell"/>
</dbReference>
<dbReference type="GO" id="GO:0005524">
    <property type="term" value="F:ATP binding"/>
    <property type="evidence" value="ECO:0007669"/>
    <property type="project" value="InterPro"/>
</dbReference>
<dbReference type="GO" id="GO:0031072">
    <property type="term" value="F:heat shock protein binding"/>
    <property type="evidence" value="ECO:0007669"/>
    <property type="project" value="InterPro"/>
</dbReference>
<dbReference type="GO" id="GO:0051082">
    <property type="term" value="F:unfolded protein binding"/>
    <property type="evidence" value="ECO:0007669"/>
    <property type="project" value="UniProtKB-UniRule"/>
</dbReference>
<dbReference type="GO" id="GO:0008270">
    <property type="term" value="F:zinc ion binding"/>
    <property type="evidence" value="ECO:0007669"/>
    <property type="project" value="UniProtKB-UniRule"/>
</dbReference>
<dbReference type="GO" id="GO:0051085">
    <property type="term" value="P:chaperone cofactor-dependent protein refolding"/>
    <property type="evidence" value="ECO:0007669"/>
    <property type="project" value="TreeGrafter"/>
</dbReference>
<dbReference type="GO" id="GO:0006260">
    <property type="term" value="P:DNA replication"/>
    <property type="evidence" value="ECO:0007669"/>
    <property type="project" value="UniProtKB-KW"/>
</dbReference>
<dbReference type="GO" id="GO:0042026">
    <property type="term" value="P:protein refolding"/>
    <property type="evidence" value="ECO:0007669"/>
    <property type="project" value="TreeGrafter"/>
</dbReference>
<dbReference type="GO" id="GO:0009408">
    <property type="term" value="P:response to heat"/>
    <property type="evidence" value="ECO:0007669"/>
    <property type="project" value="InterPro"/>
</dbReference>
<dbReference type="CDD" id="cd06257">
    <property type="entry name" value="DnaJ"/>
    <property type="match status" value="1"/>
</dbReference>
<dbReference type="CDD" id="cd10747">
    <property type="entry name" value="DnaJ_C"/>
    <property type="match status" value="1"/>
</dbReference>
<dbReference type="CDD" id="cd10719">
    <property type="entry name" value="DnaJ_zf"/>
    <property type="match status" value="1"/>
</dbReference>
<dbReference type="FunFam" id="1.10.287.110:FF:000003">
    <property type="entry name" value="Molecular chaperone DnaJ"/>
    <property type="match status" value="1"/>
</dbReference>
<dbReference type="FunFam" id="2.10.230.10:FF:000002">
    <property type="entry name" value="Molecular chaperone DnaJ"/>
    <property type="match status" value="1"/>
</dbReference>
<dbReference type="FunFam" id="2.60.260.20:FF:000004">
    <property type="entry name" value="Molecular chaperone DnaJ"/>
    <property type="match status" value="1"/>
</dbReference>
<dbReference type="Gene3D" id="1.10.287.110">
    <property type="entry name" value="DnaJ domain"/>
    <property type="match status" value="1"/>
</dbReference>
<dbReference type="Gene3D" id="2.10.230.10">
    <property type="entry name" value="Heat shock protein DnaJ, cysteine-rich domain"/>
    <property type="match status" value="1"/>
</dbReference>
<dbReference type="Gene3D" id="2.60.260.20">
    <property type="entry name" value="Urease metallochaperone UreE, N-terminal domain"/>
    <property type="match status" value="2"/>
</dbReference>
<dbReference type="HAMAP" id="MF_01152">
    <property type="entry name" value="DnaJ"/>
    <property type="match status" value="1"/>
</dbReference>
<dbReference type="InterPro" id="IPR012724">
    <property type="entry name" value="DnaJ"/>
</dbReference>
<dbReference type="InterPro" id="IPR002939">
    <property type="entry name" value="DnaJ_C"/>
</dbReference>
<dbReference type="InterPro" id="IPR001623">
    <property type="entry name" value="DnaJ_domain"/>
</dbReference>
<dbReference type="InterPro" id="IPR018253">
    <property type="entry name" value="DnaJ_domain_CS"/>
</dbReference>
<dbReference type="InterPro" id="IPR008971">
    <property type="entry name" value="HSP40/DnaJ_pept-bd"/>
</dbReference>
<dbReference type="InterPro" id="IPR001305">
    <property type="entry name" value="HSP_DnaJ_Cys-rich_dom"/>
</dbReference>
<dbReference type="InterPro" id="IPR036410">
    <property type="entry name" value="HSP_DnaJ_Cys-rich_dom_sf"/>
</dbReference>
<dbReference type="InterPro" id="IPR036869">
    <property type="entry name" value="J_dom_sf"/>
</dbReference>
<dbReference type="NCBIfam" id="TIGR02349">
    <property type="entry name" value="DnaJ_bact"/>
    <property type="match status" value="1"/>
</dbReference>
<dbReference type="NCBIfam" id="NF008035">
    <property type="entry name" value="PRK10767.1"/>
    <property type="match status" value="1"/>
</dbReference>
<dbReference type="PANTHER" id="PTHR43096:SF48">
    <property type="entry name" value="CHAPERONE PROTEIN DNAJ"/>
    <property type="match status" value="1"/>
</dbReference>
<dbReference type="PANTHER" id="PTHR43096">
    <property type="entry name" value="DNAJ HOMOLOG 1, MITOCHONDRIAL-RELATED"/>
    <property type="match status" value="1"/>
</dbReference>
<dbReference type="Pfam" id="PF00226">
    <property type="entry name" value="DnaJ"/>
    <property type="match status" value="1"/>
</dbReference>
<dbReference type="Pfam" id="PF01556">
    <property type="entry name" value="DnaJ_C"/>
    <property type="match status" value="1"/>
</dbReference>
<dbReference type="Pfam" id="PF00684">
    <property type="entry name" value="DnaJ_CXXCXGXG"/>
    <property type="match status" value="1"/>
</dbReference>
<dbReference type="PRINTS" id="PR00625">
    <property type="entry name" value="JDOMAIN"/>
</dbReference>
<dbReference type="SMART" id="SM00271">
    <property type="entry name" value="DnaJ"/>
    <property type="match status" value="1"/>
</dbReference>
<dbReference type="SUPFAM" id="SSF46565">
    <property type="entry name" value="Chaperone J-domain"/>
    <property type="match status" value="1"/>
</dbReference>
<dbReference type="SUPFAM" id="SSF57938">
    <property type="entry name" value="DnaJ/Hsp40 cysteine-rich domain"/>
    <property type="match status" value="1"/>
</dbReference>
<dbReference type="SUPFAM" id="SSF49493">
    <property type="entry name" value="HSP40/DnaJ peptide-binding domain"/>
    <property type="match status" value="2"/>
</dbReference>
<dbReference type="PROSITE" id="PS00636">
    <property type="entry name" value="DNAJ_1"/>
    <property type="match status" value="1"/>
</dbReference>
<dbReference type="PROSITE" id="PS50076">
    <property type="entry name" value="DNAJ_2"/>
    <property type="match status" value="1"/>
</dbReference>
<dbReference type="PROSITE" id="PS51188">
    <property type="entry name" value="ZF_CR"/>
    <property type="match status" value="1"/>
</dbReference>
<evidence type="ECO:0000255" key="1">
    <source>
        <dbReference type="HAMAP-Rule" id="MF_01152"/>
    </source>
</evidence>
<evidence type="ECO:0000305" key="2"/>
<comment type="function">
    <text evidence="1">Participates actively in the response to hyperosmotic and heat shock by preventing the aggregation of stress-denatured proteins and by disaggregating proteins, also in an autonomous, DnaK-independent fashion. Unfolded proteins bind initially to DnaJ; upon interaction with the DnaJ-bound protein, DnaK hydrolyzes its bound ATP, resulting in the formation of a stable complex. GrpE releases ADP from DnaK; ATP binding to DnaK triggers the release of the substrate protein, thus completing the reaction cycle. Several rounds of ATP-dependent interactions between DnaJ, DnaK and GrpE are required for fully efficient folding. Also involved, together with DnaK and GrpE, in the DNA replication of plasmids through activation of initiation proteins.</text>
</comment>
<comment type="cofactor">
    <cofactor evidence="1">
        <name>Zn(2+)</name>
        <dbReference type="ChEBI" id="CHEBI:29105"/>
    </cofactor>
    <text evidence="1">Binds 2 Zn(2+) ions per monomer.</text>
</comment>
<comment type="subunit">
    <text evidence="1">Homodimer.</text>
</comment>
<comment type="subcellular location">
    <subcellularLocation>
        <location evidence="1">Cytoplasm</location>
    </subcellularLocation>
</comment>
<comment type="domain">
    <text evidence="1">The J domain is necessary and sufficient to stimulate DnaK ATPase activity. Zinc center 1 plays an important role in the autonomous, DnaK-independent chaperone activity of DnaJ. Zinc center 2 is essential for interaction with DnaK and for DnaJ activity.</text>
</comment>
<comment type="similarity">
    <text evidence="1">Belongs to the DnaJ family.</text>
</comment>
<comment type="sequence caution" evidence="2">
    <conflict type="erroneous initiation">
        <sequence resource="EMBL-CDS" id="BAC93597"/>
    </conflict>
</comment>
<keyword id="KW-0143">Chaperone</keyword>
<keyword id="KW-0963">Cytoplasm</keyword>
<keyword id="KW-0235">DNA replication</keyword>
<keyword id="KW-0479">Metal-binding</keyword>
<keyword id="KW-0677">Repeat</keyword>
<keyword id="KW-0346">Stress response</keyword>
<keyword id="KW-0862">Zinc</keyword>
<keyword id="KW-0863">Zinc-finger</keyword>
<feature type="chain" id="PRO_0000070932" description="Chaperone protein DnaJ">
    <location>
        <begin position="1"/>
        <end position="381"/>
    </location>
</feature>
<feature type="domain" description="J" evidence="1">
    <location>
        <begin position="5"/>
        <end position="70"/>
    </location>
</feature>
<feature type="repeat" description="CXXCXGXG motif">
    <location>
        <begin position="149"/>
        <end position="156"/>
    </location>
</feature>
<feature type="repeat" description="CXXCXGXG motif">
    <location>
        <begin position="166"/>
        <end position="173"/>
    </location>
</feature>
<feature type="repeat" description="CXXCXGXG motif">
    <location>
        <begin position="188"/>
        <end position="195"/>
    </location>
</feature>
<feature type="repeat" description="CXXCXGXG motif">
    <location>
        <begin position="202"/>
        <end position="209"/>
    </location>
</feature>
<feature type="zinc finger region" description="CR-type" evidence="1">
    <location>
        <begin position="136"/>
        <end position="214"/>
    </location>
</feature>
<feature type="binding site" evidence="1">
    <location>
        <position position="149"/>
    </location>
    <ligand>
        <name>Zn(2+)</name>
        <dbReference type="ChEBI" id="CHEBI:29105"/>
        <label>1</label>
    </ligand>
</feature>
<feature type="binding site" evidence="1">
    <location>
        <position position="152"/>
    </location>
    <ligand>
        <name>Zn(2+)</name>
        <dbReference type="ChEBI" id="CHEBI:29105"/>
        <label>1</label>
    </ligand>
</feature>
<feature type="binding site" evidence="1">
    <location>
        <position position="166"/>
    </location>
    <ligand>
        <name>Zn(2+)</name>
        <dbReference type="ChEBI" id="CHEBI:29105"/>
        <label>2</label>
    </ligand>
</feature>
<feature type="binding site" evidence="1">
    <location>
        <position position="169"/>
    </location>
    <ligand>
        <name>Zn(2+)</name>
        <dbReference type="ChEBI" id="CHEBI:29105"/>
        <label>2</label>
    </ligand>
</feature>
<feature type="binding site" evidence="1">
    <location>
        <position position="188"/>
    </location>
    <ligand>
        <name>Zn(2+)</name>
        <dbReference type="ChEBI" id="CHEBI:29105"/>
        <label>2</label>
    </ligand>
</feature>
<feature type="binding site" evidence="1">
    <location>
        <position position="191"/>
    </location>
    <ligand>
        <name>Zn(2+)</name>
        <dbReference type="ChEBI" id="CHEBI:29105"/>
        <label>2</label>
    </ligand>
</feature>
<feature type="binding site" evidence="1">
    <location>
        <position position="202"/>
    </location>
    <ligand>
        <name>Zn(2+)</name>
        <dbReference type="ChEBI" id="CHEBI:29105"/>
        <label>1</label>
    </ligand>
</feature>
<feature type="binding site" evidence="1">
    <location>
        <position position="205"/>
    </location>
    <ligand>
        <name>Zn(2+)</name>
        <dbReference type="ChEBI" id="CHEBI:29105"/>
        <label>1</label>
    </ligand>
</feature>
<name>DNAJ_VIBVY</name>
<proteinExistence type="inferred from homology"/>
<sequence>MSKRDFYEVLGVSRDASERDIKKAYKRLAMKFHPDRNQGDESAADKFKEVKEAYEILTDPQKKAAYDQYGHAAFEQGGGGFGGGFGGGGADFGDIFGDVFGDIFGGGRRGGGHARPQRGADLRYNMELSLEEAVRGVSKEIEVPTLVHCDTCEGTGAKKGTSAETCGTCHGHGQVQMRQGFFAVQQTCPTCHGKGKIIKDPCNVCHGQGRKQKTKTLNVKIPAGVDTGDRIRLSGEGEAGERGAPAGDLYVQVHVREHHIFEREGNNLYCEVPVSFAMAALGGEVEVPTLDGRVNLKVPSETQTGRMFRMRGKGVKGVRGGAIGDLIVKLVVETPVNLSSRQKELLKEFEESCCGEAATKHKPKSEGFFNGVKKFFDDLTS</sequence>
<reference key="1">
    <citation type="journal article" date="2003" name="Genome Res.">
        <title>Comparative genome analysis of Vibrio vulnificus, a marine pathogen.</title>
        <authorList>
            <person name="Chen C.-Y."/>
            <person name="Wu K.-M."/>
            <person name="Chang Y.-C."/>
            <person name="Chang C.-H."/>
            <person name="Tsai H.-C."/>
            <person name="Liao T.-L."/>
            <person name="Liu Y.-M."/>
            <person name="Chen H.-J."/>
            <person name="Shen A.B.-T."/>
            <person name="Li J.-C."/>
            <person name="Su T.-L."/>
            <person name="Shao C.-P."/>
            <person name="Lee C.-T."/>
            <person name="Hor L.-I."/>
            <person name="Tsai S.-F."/>
        </authorList>
    </citation>
    <scope>NUCLEOTIDE SEQUENCE [LARGE SCALE GENOMIC DNA]</scope>
    <source>
        <strain>YJ016</strain>
    </source>
</reference>